<name>RLMKL_SALSV</name>
<gene>
    <name evidence="1" type="primary">rlmL</name>
    <name type="ordered locus">SeSA_A1123</name>
</gene>
<reference key="1">
    <citation type="journal article" date="2011" name="J. Bacteriol.">
        <title>Comparative genomics of 28 Salmonella enterica isolates: evidence for CRISPR-mediated adaptive sublineage evolution.</title>
        <authorList>
            <person name="Fricke W.F."/>
            <person name="Mammel M.K."/>
            <person name="McDermott P.F."/>
            <person name="Tartera C."/>
            <person name="White D.G."/>
            <person name="Leclerc J.E."/>
            <person name="Ravel J."/>
            <person name="Cebula T.A."/>
        </authorList>
    </citation>
    <scope>NUCLEOTIDE SEQUENCE [LARGE SCALE GENOMIC DNA]</scope>
    <source>
        <strain>CVM19633</strain>
    </source>
</reference>
<protein>
    <recommendedName>
        <fullName evidence="1">Ribosomal RNA large subunit methyltransferase K/L</fullName>
    </recommendedName>
    <domain>
        <recommendedName>
            <fullName evidence="1">23S rRNA m2G2445 methyltransferase</fullName>
            <ecNumber evidence="1">2.1.1.173</ecNumber>
        </recommendedName>
        <alternativeName>
            <fullName evidence="1">rRNA (guanine-N(2)-)-methyltransferase RlmL</fullName>
        </alternativeName>
    </domain>
    <domain>
        <recommendedName>
            <fullName evidence="1">23S rRNA m7G2069 methyltransferase</fullName>
            <ecNumber evidence="1">2.1.1.264</ecNumber>
        </recommendedName>
        <alternativeName>
            <fullName evidence="1">rRNA (guanine-N(7)-)-methyltransferase RlmK</fullName>
        </alternativeName>
    </domain>
</protein>
<proteinExistence type="inferred from homology"/>
<organism>
    <name type="scientific">Salmonella schwarzengrund (strain CVM19633)</name>
    <dbReference type="NCBI Taxonomy" id="439843"/>
    <lineage>
        <taxon>Bacteria</taxon>
        <taxon>Pseudomonadati</taxon>
        <taxon>Pseudomonadota</taxon>
        <taxon>Gammaproteobacteria</taxon>
        <taxon>Enterobacterales</taxon>
        <taxon>Enterobacteriaceae</taxon>
        <taxon>Salmonella</taxon>
    </lineage>
</organism>
<accession>B4TRX1</accession>
<comment type="function">
    <text evidence="1">Specifically methylates the guanine in position 2445 (m2G2445) and the guanine in position 2069 (m7G2069) of 23S rRNA.</text>
</comment>
<comment type="catalytic activity">
    <reaction evidence="1">
        <text>guanosine(2445) in 23S rRNA + S-adenosyl-L-methionine = N(2)-methylguanosine(2445) in 23S rRNA + S-adenosyl-L-homocysteine + H(+)</text>
        <dbReference type="Rhea" id="RHEA:42740"/>
        <dbReference type="Rhea" id="RHEA-COMP:10215"/>
        <dbReference type="Rhea" id="RHEA-COMP:10216"/>
        <dbReference type="ChEBI" id="CHEBI:15378"/>
        <dbReference type="ChEBI" id="CHEBI:57856"/>
        <dbReference type="ChEBI" id="CHEBI:59789"/>
        <dbReference type="ChEBI" id="CHEBI:74269"/>
        <dbReference type="ChEBI" id="CHEBI:74481"/>
        <dbReference type="EC" id="2.1.1.173"/>
    </reaction>
</comment>
<comment type="catalytic activity">
    <reaction evidence="1">
        <text>guanosine(2069) in 23S rRNA + S-adenosyl-L-methionine = N(2)-methylguanosine(2069) in 23S rRNA + S-adenosyl-L-homocysteine + H(+)</text>
        <dbReference type="Rhea" id="RHEA:43772"/>
        <dbReference type="Rhea" id="RHEA-COMP:10688"/>
        <dbReference type="Rhea" id="RHEA-COMP:10689"/>
        <dbReference type="ChEBI" id="CHEBI:15378"/>
        <dbReference type="ChEBI" id="CHEBI:57856"/>
        <dbReference type="ChEBI" id="CHEBI:59789"/>
        <dbReference type="ChEBI" id="CHEBI:74269"/>
        <dbReference type="ChEBI" id="CHEBI:74481"/>
        <dbReference type="EC" id="2.1.1.264"/>
    </reaction>
</comment>
<comment type="subcellular location">
    <subcellularLocation>
        <location evidence="1">Cytoplasm</location>
    </subcellularLocation>
</comment>
<comment type="similarity">
    <text evidence="1">Belongs to the methyltransferase superfamily. RlmKL family.</text>
</comment>
<feature type="chain" id="PRO_0000366815" description="Ribosomal RNA large subunit methyltransferase K/L">
    <location>
        <begin position="1"/>
        <end position="702"/>
    </location>
</feature>
<feature type="domain" description="THUMP" evidence="1">
    <location>
        <begin position="43"/>
        <end position="154"/>
    </location>
</feature>
<dbReference type="EC" id="2.1.1.173" evidence="1"/>
<dbReference type="EC" id="2.1.1.264" evidence="1"/>
<dbReference type="EMBL" id="CP001127">
    <property type="protein sequence ID" value="ACF92412.1"/>
    <property type="molecule type" value="Genomic_DNA"/>
</dbReference>
<dbReference type="SMR" id="B4TRX1"/>
<dbReference type="KEGG" id="sew:SeSA_A1123"/>
<dbReference type="HOGENOM" id="CLU_014042_2_0_6"/>
<dbReference type="Proteomes" id="UP000001865">
    <property type="component" value="Chromosome"/>
</dbReference>
<dbReference type="GO" id="GO:0005737">
    <property type="term" value="C:cytoplasm"/>
    <property type="evidence" value="ECO:0007669"/>
    <property type="project" value="UniProtKB-SubCell"/>
</dbReference>
<dbReference type="GO" id="GO:0052915">
    <property type="term" value="F:23S rRNA (guanine(2445)-N(2))-methyltransferase activity"/>
    <property type="evidence" value="ECO:0007669"/>
    <property type="project" value="UniProtKB-UniRule"/>
</dbReference>
<dbReference type="GO" id="GO:0003723">
    <property type="term" value="F:RNA binding"/>
    <property type="evidence" value="ECO:0007669"/>
    <property type="project" value="UniProtKB-KW"/>
</dbReference>
<dbReference type="GO" id="GO:0070043">
    <property type="term" value="F:rRNA (guanine-N7-)-methyltransferase activity"/>
    <property type="evidence" value="ECO:0007669"/>
    <property type="project" value="UniProtKB-UniRule"/>
</dbReference>
<dbReference type="CDD" id="cd02440">
    <property type="entry name" value="AdoMet_MTases"/>
    <property type="match status" value="2"/>
</dbReference>
<dbReference type="CDD" id="cd11715">
    <property type="entry name" value="THUMP_AdoMetMT"/>
    <property type="match status" value="1"/>
</dbReference>
<dbReference type="FunFam" id="3.30.750.80:FF:000001">
    <property type="entry name" value="Ribosomal RNA large subunit methyltransferase K/L"/>
    <property type="match status" value="1"/>
</dbReference>
<dbReference type="FunFam" id="3.40.50.150:FF:000039">
    <property type="entry name" value="Ribosomal RNA large subunit methyltransferase K/L"/>
    <property type="match status" value="1"/>
</dbReference>
<dbReference type="Gene3D" id="3.30.2130.30">
    <property type="match status" value="1"/>
</dbReference>
<dbReference type="Gene3D" id="3.30.750.80">
    <property type="entry name" value="RNA methyltransferase domain (HRMD) like"/>
    <property type="match status" value="1"/>
</dbReference>
<dbReference type="Gene3D" id="3.40.50.150">
    <property type="entry name" value="Vaccinia Virus protein VP39"/>
    <property type="match status" value="2"/>
</dbReference>
<dbReference type="HAMAP" id="MF_01858">
    <property type="entry name" value="23SrRNA_methyltr_KL"/>
    <property type="match status" value="1"/>
</dbReference>
<dbReference type="InterPro" id="IPR017244">
    <property type="entry name" value="23SrRNA_methyltr_KL"/>
</dbReference>
<dbReference type="InterPro" id="IPR002052">
    <property type="entry name" value="DNA_methylase_N6_adenine_CS"/>
</dbReference>
<dbReference type="InterPro" id="IPR000241">
    <property type="entry name" value="RlmKL-like_Mtase"/>
</dbReference>
<dbReference type="InterPro" id="IPR053943">
    <property type="entry name" value="RlmKL-like_Mtase_CS"/>
</dbReference>
<dbReference type="InterPro" id="IPR054170">
    <property type="entry name" value="RlmL_1st"/>
</dbReference>
<dbReference type="InterPro" id="IPR019614">
    <property type="entry name" value="SAM-dep_methyl-trfase"/>
</dbReference>
<dbReference type="InterPro" id="IPR029063">
    <property type="entry name" value="SAM-dependent_MTases_sf"/>
</dbReference>
<dbReference type="InterPro" id="IPR004114">
    <property type="entry name" value="THUMP_dom"/>
</dbReference>
<dbReference type="NCBIfam" id="NF008748">
    <property type="entry name" value="PRK11783.1"/>
    <property type="match status" value="1"/>
</dbReference>
<dbReference type="PANTHER" id="PTHR47313">
    <property type="entry name" value="RIBOSOMAL RNA LARGE SUBUNIT METHYLTRANSFERASE K/L"/>
    <property type="match status" value="1"/>
</dbReference>
<dbReference type="PANTHER" id="PTHR47313:SF1">
    <property type="entry name" value="RIBOSOMAL RNA LARGE SUBUNIT METHYLTRANSFERASE K_L"/>
    <property type="match status" value="1"/>
</dbReference>
<dbReference type="Pfam" id="PF10672">
    <property type="entry name" value="Methyltrans_SAM"/>
    <property type="match status" value="1"/>
</dbReference>
<dbReference type="Pfam" id="PF22020">
    <property type="entry name" value="RlmL_1st"/>
    <property type="match status" value="1"/>
</dbReference>
<dbReference type="Pfam" id="PF02926">
    <property type="entry name" value="THUMP"/>
    <property type="match status" value="1"/>
</dbReference>
<dbReference type="Pfam" id="PF01170">
    <property type="entry name" value="UPF0020"/>
    <property type="match status" value="1"/>
</dbReference>
<dbReference type="PIRSF" id="PIRSF037618">
    <property type="entry name" value="RNA_Mtase_bacteria_prd"/>
    <property type="match status" value="1"/>
</dbReference>
<dbReference type="PRINTS" id="PR00507">
    <property type="entry name" value="N12N6MTFRASE"/>
</dbReference>
<dbReference type="SMART" id="SM00981">
    <property type="entry name" value="THUMP"/>
    <property type="match status" value="1"/>
</dbReference>
<dbReference type="SUPFAM" id="SSF53335">
    <property type="entry name" value="S-adenosyl-L-methionine-dependent methyltransferases"/>
    <property type="match status" value="2"/>
</dbReference>
<dbReference type="PROSITE" id="PS51165">
    <property type="entry name" value="THUMP"/>
    <property type="match status" value="1"/>
</dbReference>
<dbReference type="PROSITE" id="PS01261">
    <property type="entry name" value="UPF0020"/>
    <property type="match status" value="1"/>
</dbReference>
<evidence type="ECO:0000255" key="1">
    <source>
        <dbReference type="HAMAP-Rule" id="MF_01858"/>
    </source>
</evidence>
<keyword id="KW-0963">Cytoplasm</keyword>
<keyword id="KW-0489">Methyltransferase</keyword>
<keyword id="KW-0694">RNA-binding</keyword>
<keyword id="KW-0698">rRNA processing</keyword>
<keyword id="KW-0949">S-adenosyl-L-methionine</keyword>
<keyword id="KW-0808">Transferase</keyword>
<sequence>MNSLFASTARGLEELLKTELEKLGAVGCQVVQGGVHFQGDTRLIYQSLMWSRLASRIILPMGECKVYSDLDLYLGVQAINWTEIFNPGATFAVHFSGLNDTIRNSQYGAMKVKDAIVDAFTRKNLPRPNVDRESPDLRINVWLNKETASIALDLSGDGLHLRGYRDRTGLAPIKETLAAAIVMRSGWQPGTPLLDPMCGSGTLLIEAAMWATDRAPGLHRGHWGFSGWAQHDEAIWQEVKAEAQTRARKGLAEYSSHFYGSDSDARVIERARSNARRAGIGELITFEVKDVAQLSNPLPKGPYGTVISNPPYGERLDSEPALIALHSLLGRTMKNQFGGWNLSLFSASPDLLGSLQLRADKQFKAKNGPLDCVQKNYHIAETTADSKPATVAEDYANRLRKNLKKLEKWARQEGIECYRLYDADLPEYNVAVDRYGDWAVIQEYAPPKTVDAQKARQRLFDIIAATLSVLGIPPNKLVLKTRERQKGKNQYQKMSEKGEFLEVSEYNARLWVNLTDYLDTGLFLDHRIARRMLGEMSKGKDFLNLFSYTGSASVHAGLGGARSTTTVDMSRTYLEWAERNLRLNGLSGRAHRLIQADCLGWLREANEQFDLIFIDPPTFSNSKRMEESFDVQRDHVALMKDLKRLLRKGGTIMFSNNKRGFRMDLEGLAELGLTAQEITQKTLSPDFARNRQIHNCWLIRAA</sequence>